<organism>
    <name type="scientific">Populus trichocarpa</name>
    <name type="common">Western balsam poplar</name>
    <name type="synonym">Populus balsamifera subsp. trichocarpa</name>
    <dbReference type="NCBI Taxonomy" id="3694"/>
    <lineage>
        <taxon>Eukaryota</taxon>
        <taxon>Viridiplantae</taxon>
        <taxon>Streptophyta</taxon>
        <taxon>Embryophyta</taxon>
        <taxon>Tracheophyta</taxon>
        <taxon>Spermatophyta</taxon>
        <taxon>Magnoliopsida</taxon>
        <taxon>eudicotyledons</taxon>
        <taxon>Gunneridae</taxon>
        <taxon>Pentapetalae</taxon>
        <taxon>rosids</taxon>
        <taxon>fabids</taxon>
        <taxon>Malpighiales</taxon>
        <taxon>Salicaceae</taxon>
        <taxon>Saliceae</taxon>
        <taxon>Populus</taxon>
    </lineage>
</organism>
<name>NRP62_POPTR</name>
<dbReference type="EMBL" id="CM009291">
    <property type="protein sequence ID" value="PNT48459.1"/>
    <property type="molecule type" value="Genomic_DNA"/>
</dbReference>
<dbReference type="SMR" id="U5GKY6"/>
<dbReference type="EnsemblPlants" id="Potri.002G080500.1.v4.1">
    <property type="protein sequence ID" value="Potri.002G080500.1.v4.1"/>
    <property type="gene ID" value="Potri.002G080500.v4.1"/>
</dbReference>
<dbReference type="GeneID" id="18096211"/>
<dbReference type="Gramene" id="Potri.002G080500.1.v4.1">
    <property type="protein sequence ID" value="Potri.002G080500.1.v4.1"/>
    <property type="gene ID" value="Potri.002G080500.v4.1"/>
</dbReference>
<dbReference type="KEGG" id="pop:18096211"/>
<dbReference type="eggNOG" id="KOG1291">
    <property type="taxonomic scope" value="Eukaryota"/>
</dbReference>
<dbReference type="HOGENOM" id="CLU_020088_0_1_1"/>
<dbReference type="InParanoid" id="U5GKY6"/>
<dbReference type="OMA" id="HGANDAC"/>
<dbReference type="OrthoDB" id="409173at2759"/>
<dbReference type="Proteomes" id="UP000006729">
    <property type="component" value="Chromosome 2"/>
</dbReference>
<dbReference type="GO" id="GO:0005886">
    <property type="term" value="C:plasma membrane"/>
    <property type="evidence" value="ECO:0000318"/>
    <property type="project" value="GO_Central"/>
</dbReference>
<dbReference type="GO" id="GO:0015086">
    <property type="term" value="F:cadmium ion transmembrane transporter activity"/>
    <property type="evidence" value="ECO:0000318"/>
    <property type="project" value="GO_Central"/>
</dbReference>
<dbReference type="GO" id="GO:0005384">
    <property type="term" value="F:manganese ion transmembrane transporter activity"/>
    <property type="evidence" value="ECO:0000318"/>
    <property type="project" value="GO_Central"/>
</dbReference>
<dbReference type="GO" id="GO:0034755">
    <property type="term" value="P:iron ion transmembrane transport"/>
    <property type="evidence" value="ECO:0000318"/>
    <property type="project" value="GO_Central"/>
</dbReference>
<dbReference type="GO" id="GO:0006828">
    <property type="term" value="P:manganese ion transport"/>
    <property type="evidence" value="ECO:0000318"/>
    <property type="project" value="GO_Central"/>
</dbReference>
<dbReference type="HAMAP" id="MF_00221">
    <property type="entry name" value="NRAMP"/>
    <property type="match status" value="1"/>
</dbReference>
<dbReference type="InterPro" id="IPR001046">
    <property type="entry name" value="NRAMP_fam"/>
</dbReference>
<dbReference type="NCBIfam" id="TIGR01197">
    <property type="entry name" value="nramp"/>
    <property type="match status" value="1"/>
</dbReference>
<dbReference type="NCBIfam" id="NF037982">
    <property type="entry name" value="Nramp_1"/>
    <property type="match status" value="1"/>
</dbReference>
<dbReference type="NCBIfam" id="NF001923">
    <property type="entry name" value="PRK00701.1"/>
    <property type="match status" value="1"/>
</dbReference>
<dbReference type="PANTHER" id="PTHR11706:SF77">
    <property type="entry name" value="METAL TRANSPORTER NRAMP5"/>
    <property type="match status" value="1"/>
</dbReference>
<dbReference type="PANTHER" id="PTHR11706">
    <property type="entry name" value="SOLUTE CARRIER PROTEIN FAMILY 11 MEMBER"/>
    <property type="match status" value="1"/>
</dbReference>
<dbReference type="Pfam" id="PF01566">
    <property type="entry name" value="Nramp"/>
    <property type="match status" value="1"/>
</dbReference>
<dbReference type="PRINTS" id="PR00447">
    <property type="entry name" value="NATRESASSCMP"/>
</dbReference>
<reference key="1">
    <citation type="journal article" date="2006" name="Science">
        <title>The genome of black cottonwood, Populus trichocarpa (Torr. &amp; Gray).</title>
        <authorList>
            <person name="Tuskan G.A."/>
            <person name="Difazio S."/>
            <person name="Jansson S."/>
            <person name="Bohlmann J."/>
            <person name="Grigoriev I."/>
            <person name="Hellsten U."/>
            <person name="Putnam N."/>
            <person name="Ralph S."/>
            <person name="Rombauts S."/>
            <person name="Salamov A."/>
            <person name="Schein J."/>
            <person name="Sterck L."/>
            <person name="Aerts A."/>
            <person name="Bhalerao R.R."/>
            <person name="Bhalerao R.P."/>
            <person name="Blaudez D."/>
            <person name="Boerjan W."/>
            <person name="Brun A."/>
            <person name="Brunner A."/>
            <person name="Busov V."/>
            <person name="Campbell M."/>
            <person name="Carlson J."/>
            <person name="Chalot M."/>
            <person name="Chapman J."/>
            <person name="Chen G.-L."/>
            <person name="Cooper D."/>
            <person name="Coutinho P.M."/>
            <person name="Couturier J."/>
            <person name="Covert S."/>
            <person name="Cronk Q."/>
            <person name="Cunningham R."/>
            <person name="Davis J."/>
            <person name="Degroeve S."/>
            <person name="Dejardin A."/>
            <person name="dePamphilis C.W."/>
            <person name="Detter J."/>
            <person name="Dirks B."/>
            <person name="Dubchak I."/>
            <person name="Duplessis S."/>
            <person name="Ehlting J."/>
            <person name="Ellis B."/>
            <person name="Gendler K."/>
            <person name="Goodstein D."/>
            <person name="Gribskov M."/>
            <person name="Grimwood J."/>
            <person name="Groover A."/>
            <person name="Gunter L."/>
            <person name="Hamberger B."/>
            <person name="Heinze B."/>
            <person name="Helariutta Y."/>
            <person name="Henrissat B."/>
            <person name="Holligan D."/>
            <person name="Holt R."/>
            <person name="Huang W."/>
            <person name="Islam-Faridi N."/>
            <person name="Jones S."/>
            <person name="Jones-Rhoades M."/>
            <person name="Jorgensen R."/>
            <person name="Joshi C."/>
            <person name="Kangasjaervi J."/>
            <person name="Karlsson J."/>
            <person name="Kelleher C."/>
            <person name="Kirkpatrick R."/>
            <person name="Kirst M."/>
            <person name="Kohler A."/>
            <person name="Kalluri U."/>
            <person name="Larimer F."/>
            <person name="Leebens-Mack J."/>
            <person name="Leple J.-C."/>
            <person name="Locascio P."/>
            <person name="Lou Y."/>
            <person name="Lucas S."/>
            <person name="Martin F."/>
            <person name="Montanini B."/>
            <person name="Napoli C."/>
            <person name="Nelson D.R."/>
            <person name="Nelson C."/>
            <person name="Nieminen K."/>
            <person name="Nilsson O."/>
            <person name="Pereda V."/>
            <person name="Peter G."/>
            <person name="Philippe R."/>
            <person name="Pilate G."/>
            <person name="Poliakov A."/>
            <person name="Razumovskaya J."/>
            <person name="Richardson P."/>
            <person name="Rinaldi C."/>
            <person name="Ritland K."/>
            <person name="Rouze P."/>
            <person name="Ryaboy D."/>
            <person name="Schmutz J."/>
            <person name="Schrader J."/>
            <person name="Segerman B."/>
            <person name="Shin H."/>
            <person name="Siddiqui A."/>
            <person name="Sterky F."/>
            <person name="Terry A."/>
            <person name="Tsai C.-J."/>
            <person name="Uberbacher E."/>
            <person name="Unneberg P."/>
            <person name="Vahala J."/>
            <person name="Wall K."/>
            <person name="Wessler S."/>
            <person name="Yang G."/>
            <person name="Yin T."/>
            <person name="Douglas C."/>
            <person name="Marra M."/>
            <person name="Sandberg G."/>
            <person name="Van de Peer Y."/>
            <person name="Rokhsar D.S."/>
        </authorList>
    </citation>
    <scope>NUCLEOTIDE SEQUENCE [LARGE SCALE GENOMIC DNA]</scope>
    <source>
        <strain>cv. Nisqually</strain>
    </source>
</reference>
<reference key="2">
    <citation type="journal article" date="2010" name="Cell. Mol. Life Sci.">
        <title>Genome-wide analysis of plant metal transporters, with an emphasis on poplar.</title>
        <authorList>
            <person name="Migeon A."/>
            <person name="Blaudez D."/>
            <person name="Wilkins O."/>
            <person name="Montanini B."/>
            <person name="Campbell M.M."/>
            <person name="Richaud P."/>
            <person name="Thomine S."/>
            <person name="Chalot M."/>
        </authorList>
    </citation>
    <scope>GENE FAMILY</scope>
    <scope>NOMENCLATURE</scope>
</reference>
<reference key="3">
    <citation type="journal article" date="2022" name="Mol. Biol. Evol.">
        <title>Duplication of NRAMP3 gene in poplars generated two homologous transporters with distinct functions.</title>
        <authorList>
            <person name="Pottier M."/>
            <person name="Le Thi V.A."/>
            <person name="Primard-Brisset C."/>
            <person name="Marion J."/>
            <person name="Bianchi M.W."/>
            <person name="Victor C."/>
            <person name="Dejardin A."/>
            <person name="Pilate G."/>
            <person name="Thomine S."/>
        </authorList>
    </citation>
    <scope>GENE FAMILY</scope>
    <source>
        <strain>cv. Nisqually</strain>
    </source>
</reference>
<protein>
    <recommendedName>
        <fullName evidence="3 4">Metal transporter Nramp6.2</fullName>
        <shortName evidence="4">PotriNRAMP6.2</shortName>
        <shortName evidence="3">PtNRAMP6.2</shortName>
    </recommendedName>
    <alternativeName>
        <fullName evidence="5">Natural resistance-associated macrophage protein 6.2</fullName>
    </alternativeName>
</protein>
<feature type="chain" id="PRO_0000457941" description="Metal transporter Nramp6.2">
    <location>
        <begin position="1"/>
        <end position="546"/>
    </location>
</feature>
<feature type="transmembrane region" description="Helical; Name=1" evidence="1">
    <location>
        <begin position="50"/>
        <end position="70"/>
    </location>
</feature>
<feature type="transmembrane region" description="Helical; Name=2" evidence="1">
    <location>
        <begin position="83"/>
        <end position="103"/>
    </location>
</feature>
<feature type="transmembrane region" description="Helical; Name=3" evidence="1">
    <location>
        <begin position="128"/>
        <end position="150"/>
    </location>
</feature>
<feature type="transmembrane region" description="Helical; Name=4" evidence="1">
    <location>
        <begin position="154"/>
        <end position="176"/>
    </location>
</feature>
<feature type="transmembrane region" description="Helical; Name=5" evidence="1">
    <location>
        <begin position="187"/>
        <end position="207"/>
    </location>
</feature>
<feature type="transmembrane region" description="Helical; Name=6" evidence="1">
    <location>
        <begin position="233"/>
        <end position="253"/>
    </location>
</feature>
<feature type="transmembrane region" description="Helical; Name=7" evidence="1">
    <location>
        <begin position="270"/>
        <end position="290"/>
    </location>
</feature>
<feature type="transmembrane region" description="Helical; Name=8" evidence="1">
    <location>
        <begin position="333"/>
        <end position="353"/>
    </location>
</feature>
<feature type="transmembrane region" description="Helical; Name=9" evidence="1">
    <location>
        <begin position="374"/>
        <end position="394"/>
    </location>
</feature>
<feature type="transmembrane region" description="Helical; Name=10" evidence="1">
    <location>
        <begin position="397"/>
        <end position="417"/>
    </location>
</feature>
<feature type="transmembrane region" description="Helical; Name=11" evidence="1">
    <location>
        <begin position="433"/>
        <end position="453"/>
    </location>
</feature>
<feature type="transmembrane region" description="Helical; Name=12" evidence="1">
    <location>
        <begin position="473"/>
        <end position="493"/>
    </location>
</feature>
<feature type="glycosylation site" description="N-linked (GlcNAc...) asparagine" evidence="2">
    <location>
        <position position="371"/>
    </location>
</feature>
<accession>U5GKY6</accession>
<sequence>MASSQQEQQACEIAPASRGNSNRIAALNLDGQSPPCIDDYDQQKPGWRKFLPYVGPGFLVSLAYLDPGNLETDLQAGANHGYELLWVILIGLIFALIIQSLAANLGVSTGRHLAELCKAEYPKYVRWSLWLLAEVAVIAADIPEVIGTAFALNILFHIPVWAGVLMTGLSTLLLLGLQKYGIRKLELLISALVFTMAACFFGELSYVKPPASGVLKGLFIPKLSGQGATGDAIALLGALVMPHNLFLHSALVLSRKVPNSVRGINDACRYFLIESGFALFVAFLINVSIISVSGTVCLAKNLSPENADQCGDLTLKGASFLLKNVLGKSSSTIYAIALLASGQSSTITGTYAGQYIMQGFLDLKMRKWLRNLTTRCIAILPSLFVSIIGGSSGASRLIIIASMILSFELPFALIPLLKFSSSNPKMGPHKNSIYIIVISWTLGFMIIGINVYYLSTGFVGWLTHNNLPKVGNVIIGIIVFPLMAIYILAIIYLTFRKDTAVTYIDPVKNDPNLEANMENGQGKSNQEMAFGRVPYREDLADVPLPE</sequence>
<evidence type="ECO:0000255" key="1"/>
<evidence type="ECO:0000255" key="2">
    <source>
        <dbReference type="PROSITE-ProRule" id="PRU00498"/>
    </source>
</evidence>
<evidence type="ECO:0000303" key="3">
    <source>
    </source>
</evidence>
<evidence type="ECO:0000303" key="4">
    <source>
    </source>
</evidence>
<evidence type="ECO:0000305" key="5"/>
<proteinExistence type="inferred from homology"/>
<keyword id="KW-0325">Glycoprotein</keyword>
<keyword id="KW-0406">Ion transport</keyword>
<keyword id="KW-0472">Membrane</keyword>
<keyword id="KW-1185">Reference proteome</keyword>
<keyword id="KW-0812">Transmembrane</keyword>
<keyword id="KW-1133">Transmembrane helix</keyword>
<keyword id="KW-0813">Transport</keyword>
<comment type="function">
    <text evidence="3">Probable divalent metal transporter.</text>
</comment>
<comment type="subcellular location">
    <subcellularLocation>
        <location evidence="1">Membrane</location>
        <topology evidence="1">Multi-pass membrane protein</topology>
    </subcellularLocation>
</comment>
<comment type="similarity">
    <text evidence="5">Belongs to the NRAMP (TC 2.A.55) family.</text>
</comment>
<gene>
    <name evidence="3 4" type="primary">NRAMP6.2</name>
    <name evidence="5" type="ordered locus">Potri.002G080500</name>
</gene>